<sequence>MSLETSSPYAFYAFYQLYSQFYRVPKITLETVNDFLYQGKGLKPEFARSPLFVTWKKLKKGEYQLRGCIGTFSEGKIEEGLKRYALISALQDSRFTPIEREELSQLRCGCNLLSQFKTIYSSEGTGNSGDIWNWEIGKHGIEIKFRHPKTNSRMSATFLPEVIPEQGWDQRETFENLIEKAGCWNYLEEVMKHWEKYFDEVIRYEGTKSEIAWDEFETGLSTVAEAE</sequence>
<accession>Q9URS8</accession>
<proteinExistence type="predicted"/>
<feature type="chain" id="PRO_0000142371" description="Uncharacterized protein KLLA0D02464g">
    <location>
        <begin position="1"/>
        <end position="227"/>
    </location>
</feature>
<feature type="domain" description="AMMECR1" evidence="1">
    <location>
        <begin position="5"/>
        <end position="220"/>
    </location>
</feature>
<organism>
    <name type="scientific">Kluyveromyces lactis (strain ATCC 8585 / CBS 2359 / DSM 70799 / NBRC 1267 / NRRL Y-1140 / WM37)</name>
    <name type="common">Yeast</name>
    <name type="synonym">Candida sphaerica</name>
    <dbReference type="NCBI Taxonomy" id="284590"/>
    <lineage>
        <taxon>Eukaryota</taxon>
        <taxon>Fungi</taxon>
        <taxon>Dikarya</taxon>
        <taxon>Ascomycota</taxon>
        <taxon>Saccharomycotina</taxon>
        <taxon>Saccharomycetes</taxon>
        <taxon>Saccharomycetales</taxon>
        <taxon>Saccharomycetaceae</taxon>
        <taxon>Kluyveromyces</taxon>
    </lineage>
</organism>
<dbReference type="EMBL" id="AJ243960">
    <property type="protein sequence ID" value="CAB51774.1"/>
    <property type="molecule type" value="Genomic_DNA"/>
</dbReference>
<dbReference type="EMBL" id="CR382124">
    <property type="protein sequence ID" value="CAH00274.1"/>
    <property type="molecule type" value="Genomic_DNA"/>
</dbReference>
<dbReference type="RefSeq" id="XP_453178.1">
    <property type="nucleotide sequence ID" value="XM_453178.1"/>
</dbReference>
<dbReference type="SMR" id="Q9URS8"/>
<dbReference type="FunCoup" id="Q9URS8">
    <property type="interactions" value="1117"/>
</dbReference>
<dbReference type="STRING" id="284590.Q9URS8"/>
<dbReference type="PaxDb" id="284590-Q9URS8"/>
<dbReference type="KEGG" id="kla:KLLA0_D02464g"/>
<dbReference type="eggNOG" id="KOG3274">
    <property type="taxonomic scope" value="Eukaryota"/>
</dbReference>
<dbReference type="HOGENOM" id="CLU_052828_3_0_1"/>
<dbReference type="InParanoid" id="Q9URS8"/>
<dbReference type="OMA" id="LFITWNK"/>
<dbReference type="Proteomes" id="UP000000598">
    <property type="component" value="Chromosome D"/>
</dbReference>
<dbReference type="Gene3D" id="3.30.700.20">
    <property type="entry name" value="Hypothetical protein ph0010, domain 1"/>
    <property type="match status" value="1"/>
</dbReference>
<dbReference type="Gene3D" id="3.30.1490.150">
    <property type="entry name" value="Hypothetical protein ph0010, domain 2"/>
    <property type="match status" value="1"/>
</dbReference>
<dbReference type="InterPro" id="IPR023473">
    <property type="entry name" value="AMMECR1"/>
</dbReference>
<dbReference type="InterPro" id="IPR036071">
    <property type="entry name" value="AMMECR1_dom_sf"/>
</dbReference>
<dbReference type="InterPro" id="IPR002733">
    <property type="entry name" value="AMMECR1_domain"/>
</dbReference>
<dbReference type="InterPro" id="IPR027485">
    <property type="entry name" value="AMMECR1_N"/>
</dbReference>
<dbReference type="NCBIfam" id="TIGR00296">
    <property type="entry name" value="TIGR00296 family protein"/>
    <property type="match status" value="1"/>
</dbReference>
<dbReference type="PANTHER" id="PTHR13016:SF0">
    <property type="entry name" value="AMME SYNDROME CANDIDATE GENE 1 PROTEIN"/>
    <property type="match status" value="1"/>
</dbReference>
<dbReference type="PANTHER" id="PTHR13016">
    <property type="entry name" value="AMMECR1 HOMOLOG"/>
    <property type="match status" value="1"/>
</dbReference>
<dbReference type="Pfam" id="PF01871">
    <property type="entry name" value="AMMECR1"/>
    <property type="match status" value="1"/>
</dbReference>
<dbReference type="SUPFAM" id="SSF143447">
    <property type="entry name" value="AMMECR1-like"/>
    <property type="match status" value="1"/>
</dbReference>
<dbReference type="PROSITE" id="PS51112">
    <property type="entry name" value="AMMECR1"/>
    <property type="match status" value="1"/>
</dbReference>
<reference key="1">
    <citation type="journal article" date="2000" name="Yeast">
        <title>Protein disulfide isomerase genes of Kluyveromyces lactis.</title>
        <authorList>
            <person name="Bao W.-G."/>
            <person name="Huo K.K."/>
            <person name="Li Y.Y."/>
            <person name="Fukuhara H."/>
        </authorList>
    </citation>
    <scope>NUCLEOTIDE SEQUENCE [GENOMIC DNA]</scope>
    <source>
        <strain>ATCC 76492 / CBS 2359/152 / CLIB 210</strain>
    </source>
</reference>
<reference key="2">
    <citation type="journal article" date="2004" name="Nature">
        <title>Genome evolution in yeasts.</title>
        <authorList>
            <person name="Dujon B."/>
            <person name="Sherman D."/>
            <person name="Fischer G."/>
            <person name="Durrens P."/>
            <person name="Casaregola S."/>
            <person name="Lafontaine I."/>
            <person name="de Montigny J."/>
            <person name="Marck C."/>
            <person name="Neuveglise C."/>
            <person name="Talla E."/>
            <person name="Goffard N."/>
            <person name="Frangeul L."/>
            <person name="Aigle M."/>
            <person name="Anthouard V."/>
            <person name="Babour A."/>
            <person name="Barbe V."/>
            <person name="Barnay S."/>
            <person name="Blanchin S."/>
            <person name="Beckerich J.-M."/>
            <person name="Beyne E."/>
            <person name="Bleykasten C."/>
            <person name="Boisrame A."/>
            <person name="Boyer J."/>
            <person name="Cattolico L."/>
            <person name="Confanioleri F."/>
            <person name="de Daruvar A."/>
            <person name="Despons L."/>
            <person name="Fabre E."/>
            <person name="Fairhead C."/>
            <person name="Ferry-Dumazet H."/>
            <person name="Groppi A."/>
            <person name="Hantraye F."/>
            <person name="Hennequin C."/>
            <person name="Jauniaux N."/>
            <person name="Joyet P."/>
            <person name="Kachouri R."/>
            <person name="Kerrest A."/>
            <person name="Koszul R."/>
            <person name="Lemaire M."/>
            <person name="Lesur I."/>
            <person name="Ma L."/>
            <person name="Muller H."/>
            <person name="Nicaud J.-M."/>
            <person name="Nikolski M."/>
            <person name="Oztas S."/>
            <person name="Ozier-Kalogeropoulos O."/>
            <person name="Pellenz S."/>
            <person name="Potier S."/>
            <person name="Richard G.-F."/>
            <person name="Straub M.-L."/>
            <person name="Suleau A."/>
            <person name="Swennen D."/>
            <person name="Tekaia F."/>
            <person name="Wesolowski-Louvel M."/>
            <person name="Westhof E."/>
            <person name="Wirth B."/>
            <person name="Zeniou-Meyer M."/>
            <person name="Zivanovic Y."/>
            <person name="Bolotin-Fukuhara M."/>
            <person name="Thierry A."/>
            <person name="Bouchier C."/>
            <person name="Caudron B."/>
            <person name="Scarpelli C."/>
            <person name="Gaillardin C."/>
            <person name="Weissenbach J."/>
            <person name="Wincker P."/>
            <person name="Souciet J.-L."/>
        </authorList>
    </citation>
    <scope>NUCLEOTIDE SEQUENCE [LARGE SCALE GENOMIC DNA]</scope>
    <source>
        <strain>ATCC 8585 / CBS 2359 / DSM 70799 / NBRC 1267 / NRRL Y-1140 / WM37</strain>
    </source>
</reference>
<protein>
    <recommendedName>
        <fullName>Uncharacterized protein KLLA0D02464g</fullName>
    </recommendedName>
</protein>
<name>Y464_KLULA</name>
<gene>
    <name type="ordered locus">KLLA0D02464g</name>
</gene>
<evidence type="ECO:0000255" key="1">
    <source>
        <dbReference type="PROSITE-ProRule" id="PRU00467"/>
    </source>
</evidence>
<keyword id="KW-1185">Reference proteome</keyword>